<gene>
    <name evidence="1" type="primary">rpmJ</name>
    <name type="ordered locus">cauri_2114</name>
</gene>
<keyword id="KW-1185">Reference proteome</keyword>
<keyword id="KW-0687">Ribonucleoprotein</keyword>
<keyword id="KW-0689">Ribosomal protein</keyword>
<accession>C3PIQ3</accession>
<sequence length="40" mass="4688">MKVRKSLRSLKKKPGAQVIRRHGKVFVINKKDPRFKARQG</sequence>
<proteinExistence type="inferred from homology"/>
<reference key="1">
    <citation type="journal article" date="2010" name="BMC Genomics">
        <title>Complete genome sequence and lifestyle of black-pigmented Corynebacterium aurimucosum ATCC 700975 (formerly C. nigricans CN-1) isolated from a vaginal swab of a woman with spontaneous abortion.</title>
        <authorList>
            <person name="Trost E."/>
            <person name="Gotker S."/>
            <person name="Schneider J."/>
            <person name="Schneiker-Bekel S."/>
            <person name="Szczepanowski R."/>
            <person name="Tilker A."/>
            <person name="Viehoever P."/>
            <person name="Arnold W."/>
            <person name="Bekel T."/>
            <person name="Blom J."/>
            <person name="Gartemann K.H."/>
            <person name="Linke B."/>
            <person name="Goesmann A."/>
            <person name="Puhler A."/>
            <person name="Shukla S.K."/>
            <person name="Tauch A."/>
        </authorList>
    </citation>
    <scope>NUCLEOTIDE SEQUENCE [LARGE SCALE GENOMIC DNA]</scope>
    <source>
        <strain>ATCC 700975 / DSM 44827 / CIP 107346 / CN-1</strain>
    </source>
</reference>
<dbReference type="EMBL" id="CP001601">
    <property type="protein sequence ID" value="ACP33707.1"/>
    <property type="molecule type" value="Genomic_DNA"/>
</dbReference>
<dbReference type="SMR" id="C3PIQ3"/>
<dbReference type="STRING" id="548476.cauri_2114"/>
<dbReference type="KEGG" id="car:cauri_2114"/>
<dbReference type="eggNOG" id="COG0257">
    <property type="taxonomic scope" value="Bacteria"/>
</dbReference>
<dbReference type="HOGENOM" id="CLU_135723_3_1_11"/>
<dbReference type="Proteomes" id="UP000002077">
    <property type="component" value="Chromosome"/>
</dbReference>
<dbReference type="GO" id="GO:1990904">
    <property type="term" value="C:ribonucleoprotein complex"/>
    <property type="evidence" value="ECO:0007669"/>
    <property type="project" value="UniProtKB-KW"/>
</dbReference>
<dbReference type="GO" id="GO:0005840">
    <property type="term" value="C:ribosome"/>
    <property type="evidence" value="ECO:0007669"/>
    <property type="project" value="UniProtKB-KW"/>
</dbReference>
<dbReference type="GO" id="GO:0003735">
    <property type="term" value="F:structural constituent of ribosome"/>
    <property type="evidence" value="ECO:0007669"/>
    <property type="project" value="InterPro"/>
</dbReference>
<dbReference type="GO" id="GO:0006412">
    <property type="term" value="P:translation"/>
    <property type="evidence" value="ECO:0007669"/>
    <property type="project" value="UniProtKB-UniRule"/>
</dbReference>
<dbReference type="HAMAP" id="MF_00251">
    <property type="entry name" value="Ribosomal_bL36"/>
    <property type="match status" value="1"/>
</dbReference>
<dbReference type="InterPro" id="IPR000473">
    <property type="entry name" value="Ribosomal_bL36"/>
</dbReference>
<dbReference type="InterPro" id="IPR035977">
    <property type="entry name" value="Ribosomal_bL36_sp"/>
</dbReference>
<dbReference type="InterPro" id="IPR047621">
    <property type="entry name" value="Ribosomal_L36_bact"/>
</dbReference>
<dbReference type="NCBIfam" id="NF002021">
    <property type="entry name" value="PRK00831.1"/>
    <property type="match status" value="1"/>
</dbReference>
<dbReference type="PANTHER" id="PTHR47781">
    <property type="entry name" value="50S RIBOSOMAL PROTEIN L36 2"/>
    <property type="match status" value="1"/>
</dbReference>
<dbReference type="PANTHER" id="PTHR47781:SF1">
    <property type="entry name" value="LARGE RIBOSOMAL SUBUNIT PROTEIN BL36B"/>
    <property type="match status" value="1"/>
</dbReference>
<dbReference type="Pfam" id="PF00444">
    <property type="entry name" value="Ribosomal_L36"/>
    <property type="match status" value="1"/>
</dbReference>
<dbReference type="SUPFAM" id="SSF57840">
    <property type="entry name" value="Ribosomal protein L36"/>
    <property type="match status" value="1"/>
</dbReference>
<name>RL36_CORA7</name>
<organism>
    <name type="scientific">Corynebacterium aurimucosum (strain ATCC 700975 / DSM 44827 / CIP 107346 / CN-1)</name>
    <name type="common">Corynebacterium nigricans</name>
    <dbReference type="NCBI Taxonomy" id="548476"/>
    <lineage>
        <taxon>Bacteria</taxon>
        <taxon>Bacillati</taxon>
        <taxon>Actinomycetota</taxon>
        <taxon>Actinomycetes</taxon>
        <taxon>Mycobacteriales</taxon>
        <taxon>Corynebacteriaceae</taxon>
        <taxon>Corynebacterium</taxon>
    </lineage>
</organism>
<protein>
    <recommendedName>
        <fullName evidence="1">Large ribosomal subunit protein bL36</fullName>
    </recommendedName>
    <alternativeName>
        <fullName evidence="2">50S ribosomal protein L36</fullName>
    </alternativeName>
</protein>
<feature type="chain" id="PRO_1000196181" description="Large ribosomal subunit protein bL36">
    <location>
        <begin position="1"/>
        <end position="40"/>
    </location>
</feature>
<comment type="similarity">
    <text evidence="1">Belongs to the bacterial ribosomal protein bL36 family.</text>
</comment>
<evidence type="ECO:0000255" key="1">
    <source>
        <dbReference type="HAMAP-Rule" id="MF_00251"/>
    </source>
</evidence>
<evidence type="ECO:0000305" key="2"/>